<sequence>MAGVRQHGWRAIPAVCSEYGADTLPDRYRSDGRCLLFRQQAGISALKQELEVKTPYRAMNHPVIGVVTKADLASMEQISLVKCWLREAGAHNVLVTSAVNNNGVTELFALLHTEEGCR</sequence>
<organism>
    <name type="scientific">Escherichia coli O157:H7</name>
    <dbReference type="NCBI Taxonomy" id="83334"/>
    <lineage>
        <taxon>Bacteria</taxon>
        <taxon>Pseudomonadati</taxon>
        <taxon>Pseudomonadota</taxon>
        <taxon>Gammaproteobacteria</taxon>
        <taxon>Enterobacterales</taxon>
        <taxon>Enterobacteriaceae</taxon>
        <taxon>Escherichia</taxon>
    </lineage>
</organism>
<dbReference type="EMBL" id="AE005174">
    <property type="protein sequence ID" value="AAG57065.1"/>
    <property type="molecule type" value="Genomic_DNA"/>
</dbReference>
<dbReference type="EMBL" id="BA000007">
    <property type="protein sequence ID" value="BAB36231.1"/>
    <property type="molecule type" value="Genomic_DNA"/>
</dbReference>
<dbReference type="PIR" id="E85825">
    <property type="entry name" value="E85825"/>
</dbReference>
<dbReference type="PIR" id="H90979">
    <property type="entry name" value="H90979"/>
</dbReference>
<dbReference type="RefSeq" id="NP_310835.1">
    <property type="nucleotide sequence ID" value="NC_002695.1"/>
</dbReference>
<dbReference type="RefSeq" id="WP_001303565.1">
    <property type="nucleotide sequence ID" value="NZ_CP064383.1"/>
</dbReference>
<dbReference type="SMR" id="Q8X8U4"/>
<dbReference type="KEGG" id="ece:Z3167"/>
<dbReference type="KEGG" id="ecs:ECs_2808"/>
<dbReference type="PATRIC" id="fig|386585.9.peg.2944"/>
<dbReference type="eggNOG" id="COG4917">
    <property type="taxonomic scope" value="Bacteria"/>
</dbReference>
<dbReference type="HOGENOM" id="CLU_165390_0_0_6"/>
<dbReference type="OMA" id="KTPYWAM"/>
<dbReference type="Proteomes" id="UP000000558">
    <property type="component" value="Chromosome"/>
</dbReference>
<dbReference type="Proteomes" id="UP000002519">
    <property type="component" value="Chromosome"/>
</dbReference>
<dbReference type="GO" id="GO:0005524">
    <property type="term" value="F:ATP binding"/>
    <property type="evidence" value="ECO:0007669"/>
    <property type="project" value="InterPro"/>
</dbReference>
<dbReference type="GO" id="GO:0006576">
    <property type="term" value="P:biogenic amine metabolic process"/>
    <property type="evidence" value="ECO:0007669"/>
    <property type="project" value="InterPro"/>
</dbReference>
<dbReference type="CDD" id="cd00882">
    <property type="entry name" value="Ras_like_GTPase"/>
    <property type="match status" value="1"/>
</dbReference>
<dbReference type="Gene3D" id="3.40.50.300">
    <property type="entry name" value="P-loop containing nucleotide triphosphate hydrolases"/>
    <property type="match status" value="1"/>
</dbReference>
<dbReference type="InterPro" id="IPR012381">
    <property type="entry name" value="EutP_PduV"/>
</dbReference>
<dbReference type="InterPro" id="IPR027417">
    <property type="entry name" value="P-loop_NTPase"/>
</dbReference>
<dbReference type="PANTHER" id="PTHR40453">
    <property type="entry name" value="PROTEIN YOEF"/>
    <property type="match status" value="1"/>
</dbReference>
<dbReference type="PANTHER" id="PTHR40453:SF1">
    <property type="entry name" value="PROTEIN YOEF"/>
    <property type="match status" value="1"/>
</dbReference>
<dbReference type="Pfam" id="PF10662">
    <property type="entry name" value="PduV-EutP"/>
    <property type="match status" value="1"/>
</dbReference>
<dbReference type="SUPFAM" id="SSF52540">
    <property type="entry name" value="P-loop containing nucleoside triphosphate hydrolases"/>
    <property type="match status" value="1"/>
</dbReference>
<proteinExistence type="predicted"/>
<accession>Q8X8U4</accession>
<accession>Q7ACR7</accession>
<reference key="1">
    <citation type="journal article" date="2001" name="Nature">
        <title>Genome sequence of enterohaemorrhagic Escherichia coli O157:H7.</title>
        <authorList>
            <person name="Perna N.T."/>
            <person name="Plunkett G. III"/>
            <person name="Burland V."/>
            <person name="Mau B."/>
            <person name="Glasner J.D."/>
            <person name="Rose D.J."/>
            <person name="Mayhew G.F."/>
            <person name="Evans P.S."/>
            <person name="Gregor J."/>
            <person name="Kirkpatrick H.A."/>
            <person name="Posfai G."/>
            <person name="Hackett J."/>
            <person name="Klink S."/>
            <person name="Boutin A."/>
            <person name="Shao Y."/>
            <person name="Miller L."/>
            <person name="Grotbeck E.J."/>
            <person name="Davis N.W."/>
            <person name="Lim A."/>
            <person name="Dimalanta E.T."/>
            <person name="Potamousis K."/>
            <person name="Apodaca J."/>
            <person name="Anantharaman T.S."/>
            <person name="Lin J."/>
            <person name="Yen G."/>
            <person name="Schwartz D.C."/>
            <person name="Welch R.A."/>
            <person name="Blattner F.R."/>
        </authorList>
    </citation>
    <scope>NUCLEOTIDE SEQUENCE [LARGE SCALE GENOMIC DNA]</scope>
    <source>
        <strain>O157:H7 / EDL933 / ATCC 700927 / EHEC</strain>
    </source>
</reference>
<reference key="2">
    <citation type="journal article" date="2001" name="DNA Res.">
        <title>Complete genome sequence of enterohemorrhagic Escherichia coli O157:H7 and genomic comparison with a laboratory strain K-12.</title>
        <authorList>
            <person name="Hayashi T."/>
            <person name="Makino K."/>
            <person name="Ohnishi M."/>
            <person name="Kurokawa K."/>
            <person name="Ishii K."/>
            <person name="Yokoyama K."/>
            <person name="Han C.-G."/>
            <person name="Ohtsubo E."/>
            <person name="Nakayama K."/>
            <person name="Murata T."/>
            <person name="Tanaka M."/>
            <person name="Tobe T."/>
            <person name="Iida T."/>
            <person name="Takami H."/>
            <person name="Honda T."/>
            <person name="Sasakawa C."/>
            <person name="Ogasawara N."/>
            <person name="Yasunaga T."/>
            <person name="Kuhara S."/>
            <person name="Shiba T."/>
            <person name="Hattori M."/>
            <person name="Shinagawa H."/>
        </authorList>
    </citation>
    <scope>NUCLEOTIDE SEQUENCE [LARGE SCALE GENOMIC DNA]</scope>
    <source>
        <strain>O157:H7 / Sakai / RIMD 0509952 / EHEC</strain>
    </source>
</reference>
<protein>
    <recommendedName>
        <fullName>Uncharacterized protein YoeF</fullName>
    </recommendedName>
</protein>
<name>YOEF_ECO57</name>
<gene>
    <name type="primary">yoeF</name>
    <name type="ordered locus">Z3167</name>
    <name type="ordered locus">ECs2808</name>
</gene>
<feature type="chain" id="PRO_0000252219" description="Uncharacterized protein YoeF">
    <location>
        <begin position="1"/>
        <end position="118"/>
    </location>
</feature>
<keyword id="KW-1185">Reference proteome</keyword>